<sequence>MKQRLKQLYMETIVPKLMEKFKYKNIHQVPRIKKIVINRGIGEASQSNKILESSFKELNLIAGQKGVITRSKKAIATFKLRKNVPVGVTVTLRGERMYGFLDRMINLALPRIRDFQGINPKSFDKFGSYSLGLEEQLMFPEMEYDKIDQICGMDISIVTTSTKIEEGLILLKEFGLPFKN</sequence>
<organism>
    <name type="scientific">Oedogonium cardiacum</name>
    <name type="common">Filamentous green alga</name>
    <dbReference type="NCBI Taxonomy" id="55995"/>
    <lineage>
        <taxon>Eukaryota</taxon>
        <taxon>Viridiplantae</taxon>
        <taxon>Chlorophyta</taxon>
        <taxon>core chlorophytes</taxon>
        <taxon>Chlorophyceae</taxon>
        <taxon>OCC clade</taxon>
        <taxon>Oedogoniales</taxon>
        <taxon>Oedogoniaceae</taxon>
        <taxon>Oedogonium</taxon>
    </lineage>
</organism>
<geneLocation type="chloroplast"/>
<comment type="function">
    <text evidence="1">Binds 5S rRNA, forms part of the central protuberance of the 50S subunit.</text>
</comment>
<comment type="subunit">
    <text evidence="1">Part of the 50S ribosomal subunit; contacts the 5S rRNA.</text>
</comment>
<comment type="subcellular location">
    <subcellularLocation>
        <location>Plastid</location>
        <location>Chloroplast</location>
    </subcellularLocation>
</comment>
<comment type="similarity">
    <text evidence="2">Belongs to the universal ribosomal protein uL5 family.</text>
</comment>
<accession>B2X1Y4</accession>
<dbReference type="EMBL" id="EF587357">
    <property type="protein sequence ID" value="ABU88197.1"/>
    <property type="molecule type" value="Genomic_DNA"/>
</dbReference>
<dbReference type="EMBL" id="EU677193">
    <property type="protein sequence ID" value="ACC97247.1"/>
    <property type="molecule type" value="Genomic_DNA"/>
</dbReference>
<dbReference type="RefSeq" id="YP_002000441.1">
    <property type="nucleotide sequence ID" value="NC_011031.1"/>
</dbReference>
<dbReference type="SMR" id="B2X1Y4"/>
<dbReference type="GeneID" id="6440068"/>
<dbReference type="GO" id="GO:0009507">
    <property type="term" value="C:chloroplast"/>
    <property type="evidence" value="ECO:0007669"/>
    <property type="project" value="UniProtKB-SubCell"/>
</dbReference>
<dbReference type="GO" id="GO:1990904">
    <property type="term" value="C:ribonucleoprotein complex"/>
    <property type="evidence" value="ECO:0007669"/>
    <property type="project" value="UniProtKB-KW"/>
</dbReference>
<dbReference type="GO" id="GO:0005840">
    <property type="term" value="C:ribosome"/>
    <property type="evidence" value="ECO:0007669"/>
    <property type="project" value="UniProtKB-KW"/>
</dbReference>
<dbReference type="GO" id="GO:0019843">
    <property type="term" value="F:rRNA binding"/>
    <property type="evidence" value="ECO:0007669"/>
    <property type="project" value="UniProtKB-UniRule"/>
</dbReference>
<dbReference type="GO" id="GO:0003735">
    <property type="term" value="F:structural constituent of ribosome"/>
    <property type="evidence" value="ECO:0007669"/>
    <property type="project" value="InterPro"/>
</dbReference>
<dbReference type="GO" id="GO:0006412">
    <property type="term" value="P:translation"/>
    <property type="evidence" value="ECO:0007669"/>
    <property type="project" value="UniProtKB-UniRule"/>
</dbReference>
<dbReference type="FunFam" id="3.30.1440.10:FF:000001">
    <property type="entry name" value="50S ribosomal protein L5"/>
    <property type="match status" value="1"/>
</dbReference>
<dbReference type="Gene3D" id="3.30.1440.10">
    <property type="match status" value="1"/>
</dbReference>
<dbReference type="HAMAP" id="MF_01333_B">
    <property type="entry name" value="Ribosomal_uL5_B"/>
    <property type="match status" value="1"/>
</dbReference>
<dbReference type="InterPro" id="IPR002132">
    <property type="entry name" value="Ribosomal_uL5"/>
</dbReference>
<dbReference type="InterPro" id="IPR020930">
    <property type="entry name" value="Ribosomal_uL5_bac-type"/>
</dbReference>
<dbReference type="InterPro" id="IPR031309">
    <property type="entry name" value="Ribosomal_uL5_C"/>
</dbReference>
<dbReference type="InterPro" id="IPR020929">
    <property type="entry name" value="Ribosomal_uL5_CS"/>
</dbReference>
<dbReference type="InterPro" id="IPR022803">
    <property type="entry name" value="Ribosomal_uL5_dom_sf"/>
</dbReference>
<dbReference type="InterPro" id="IPR031310">
    <property type="entry name" value="Ribosomal_uL5_N"/>
</dbReference>
<dbReference type="NCBIfam" id="NF000585">
    <property type="entry name" value="PRK00010.1"/>
    <property type="match status" value="1"/>
</dbReference>
<dbReference type="PANTHER" id="PTHR11994">
    <property type="entry name" value="60S RIBOSOMAL PROTEIN L11-RELATED"/>
    <property type="match status" value="1"/>
</dbReference>
<dbReference type="Pfam" id="PF00281">
    <property type="entry name" value="Ribosomal_L5"/>
    <property type="match status" value="1"/>
</dbReference>
<dbReference type="Pfam" id="PF00673">
    <property type="entry name" value="Ribosomal_L5_C"/>
    <property type="match status" value="1"/>
</dbReference>
<dbReference type="PIRSF" id="PIRSF002161">
    <property type="entry name" value="Ribosomal_L5"/>
    <property type="match status" value="1"/>
</dbReference>
<dbReference type="SUPFAM" id="SSF55282">
    <property type="entry name" value="RL5-like"/>
    <property type="match status" value="1"/>
</dbReference>
<dbReference type="PROSITE" id="PS00358">
    <property type="entry name" value="RIBOSOMAL_L5"/>
    <property type="match status" value="1"/>
</dbReference>
<feature type="chain" id="PRO_0000365649" description="Large ribosomal subunit protein uL5c">
    <location>
        <begin position="1"/>
        <end position="180"/>
    </location>
</feature>
<proteinExistence type="inferred from homology"/>
<protein>
    <recommendedName>
        <fullName evidence="2">Large ribosomal subunit protein uL5c</fullName>
    </recommendedName>
    <alternativeName>
        <fullName>50S ribosomal protein L5, chloroplastic</fullName>
    </alternativeName>
</protein>
<evidence type="ECO:0000250" key="1"/>
<evidence type="ECO:0000305" key="2"/>
<reference key="1">
    <citation type="journal article" date="2008" name="J. Phycol.">
        <title>Deep division in the Chlorophyceae (Chlorophyta) revealed by chloroplast phylogenomic analyseS.</title>
        <authorList>
            <person name="Turmel M."/>
            <person name="Brouard J.-S."/>
            <person name="Gagnon C."/>
            <person name="Otis C."/>
            <person name="Lemieux C."/>
        </authorList>
        <dbReference type="AGRICOLA" id="IND44059346"/>
    </citation>
    <scope>NUCLEOTIDE SEQUENCE [GENOMIC DNA]</scope>
    <source>
        <strain>SAG 575-1b / CCAP 575/1B / UTEX LB 40</strain>
    </source>
</reference>
<reference key="2">
    <citation type="journal article" date="2008" name="BMC Genomics">
        <title>Chloroplast DNA sequence of the green alga Oedogonium cardiacum (Chlorophyceae): unique genome architecture, derived characters shared with the Chaetophorales and novel genes acquired through horizontal transfer.</title>
        <authorList>
            <person name="Brouard J.-S."/>
            <person name="Otis C."/>
            <person name="Lemieux C."/>
            <person name="Turmel M."/>
        </authorList>
    </citation>
    <scope>NUCLEOTIDE SEQUENCE [LARGE SCALE GENOMIC DNA]</scope>
    <source>
        <strain>SAG 575-1b / CCAP 575/1B / UTEX LB 40</strain>
    </source>
</reference>
<gene>
    <name type="primary">rpl5</name>
</gene>
<name>RK5_OEDCA</name>
<keyword id="KW-0150">Chloroplast</keyword>
<keyword id="KW-0934">Plastid</keyword>
<keyword id="KW-0687">Ribonucleoprotein</keyword>
<keyword id="KW-0689">Ribosomal protein</keyword>
<keyword id="KW-0694">RNA-binding</keyword>
<keyword id="KW-0699">rRNA-binding</keyword>